<feature type="chain" id="PRO_0000390021" description="NADH-quinone oxidoreductase subunit K">
    <location>
        <begin position="1"/>
        <end position="101"/>
    </location>
</feature>
<feature type="transmembrane region" description="Helical" evidence="1">
    <location>
        <begin position="4"/>
        <end position="24"/>
    </location>
</feature>
<feature type="transmembrane region" description="Helical" evidence="1">
    <location>
        <begin position="30"/>
        <end position="50"/>
    </location>
</feature>
<feature type="transmembrane region" description="Helical" evidence="1">
    <location>
        <begin position="61"/>
        <end position="81"/>
    </location>
</feature>
<gene>
    <name evidence="1" type="primary">nuoK</name>
    <name type="ordered locus">CBUD_0556</name>
</gene>
<dbReference type="EC" id="7.1.1.-" evidence="1"/>
<dbReference type="EMBL" id="CP000733">
    <property type="protein sequence ID" value="ABS77641.1"/>
    <property type="molecule type" value="Genomic_DNA"/>
</dbReference>
<dbReference type="RefSeq" id="WP_005769056.1">
    <property type="nucleotide sequence ID" value="NC_009727.1"/>
</dbReference>
<dbReference type="SMR" id="A9KBL5"/>
<dbReference type="KEGG" id="cbd:CBUD_0556"/>
<dbReference type="HOGENOM" id="CLU_144724_2_0_6"/>
<dbReference type="Proteomes" id="UP000008555">
    <property type="component" value="Chromosome"/>
</dbReference>
<dbReference type="GO" id="GO:0030964">
    <property type="term" value="C:NADH dehydrogenase complex"/>
    <property type="evidence" value="ECO:0007669"/>
    <property type="project" value="TreeGrafter"/>
</dbReference>
<dbReference type="GO" id="GO:0005886">
    <property type="term" value="C:plasma membrane"/>
    <property type="evidence" value="ECO:0007669"/>
    <property type="project" value="UniProtKB-SubCell"/>
</dbReference>
<dbReference type="GO" id="GO:0050136">
    <property type="term" value="F:NADH:ubiquinone reductase (non-electrogenic) activity"/>
    <property type="evidence" value="ECO:0007669"/>
    <property type="project" value="UniProtKB-UniRule"/>
</dbReference>
<dbReference type="GO" id="GO:0048038">
    <property type="term" value="F:quinone binding"/>
    <property type="evidence" value="ECO:0007669"/>
    <property type="project" value="UniProtKB-KW"/>
</dbReference>
<dbReference type="GO" id="GO:0042773">
    <property type="term" value="P:ATP synthesis coupled electron transport"/>
    <property type="evidence" value="ECO:0007669"/>
    <property type="project" value="InterPro"/>
</dbReference>
<dbReference type="FunFam" id="1.10.287.3510:FF:000001">
    <property type="entry name" value="NADH-quinone oxidoreductase subunit K"/>
    <property type="match status" value="1"/>
</dbReference>
<dbReference type="Gene3D" id="1.10.287.3510">
    <property type="match status" value="1"/>
</dbReference>
<dbReference type="HAMAP" id="MF_01456">
    <property type="entry name" value="NDH1_NuoK"/>
    <property type="match status" value="1"/>
</dbReference>
<dbReference type="InterPro" id="IPR001133">
    <property type="entry name" value="NADH_UbQ_OxRdtase_chain4L/K"/>
</dbReference>
<dbReference type="InterPro" id="IPR039428">
    <property type="entry name" value="NUOK/Mnh_C1-like"/>
</dbReference>
<dbReference type="NCBIfam" id="NF004320">
    <property type="entry name" value="PRK05715.1-2"/>
    <property type="match status" value="1"/>
</dbReference>
<dbReference type="NCBIfam" id="NF004321">
    <property type="entry name" value="PRK05715.1-3"/>
    <property type="match status" value="1"/>
</dbReference>
<dbReference type="NCBIfam" id="NF004323">
    <property type="entry name" value="PRK05715.1-5"/>
    <property type="match status" value="1"/>
</dbReference>
<dbReference type="PANTHER" id="PTHR11434:SF21">
    <property type="entry name" value="NADH DEHYDROGENASE SUBUNIT 4L-RELATED"/>
    <property type="match status" value="1"/>
</dbReference>
<dbReference type="PANTHER" id="PTHR11434">
    <property type="entry name" value="NADH-UBIQUINONE OXIDOREDUCTASE SUBUNIT ND4L"/>
    <property type="match status" value="1"/>
</dbReference>
<dbReference type="Pfam" id="PF00420">
    <property type="entry name" value="Oxidored_q2"/>
    <property type="match status" value="1"/>
</dbReference>
<accession>A9KBL5</accession>
<protein>
    <recommendedName>
        <fullName evidence="1">NADH-quinone oxidoreductase subunit K</fullName>
        <ecNumber evidence="1">7.1.1.-</ecNumber>
    </recommendedName>
    <alternativeName>
        <fullName evidence="1">NADH dehydrogenase I subunit K</fullName>
    </alternativeName>
    <alternativeName>
        <fullName evidence="1">NDH-1 subunit K</fullName>
    </alternativeName>
</protein>
<comment type="function">
    <text evidence="1">NDH-1 shuttles electrons from NADH, via FMN and iron-sulfur (Fe-S) centers, to quinones in the respiratory chain. The immediate electron acceptor for the enzyme in this species is believed to be ubiquinone. Couples the redox reaction to proton translocation (for every two electrons transferred, four hydrogen ions are translocated across the cytoplasmic membrane), and thus conserves the redox energy in a proton gradient.</text>
</comment>
<comment type="catalytic activity">
    <reaction evidence="1">
        <text>a quinone + NADH + 5 H(+)(in) = a quinol + NAD(+) + 4 H(+)(out)</text>
        <dbReference type="Rhea" id="RHEA:57888"/>
        <dbReference type="ChEBI" id="CHEBI:15378"/>
        <dbReference type="ChEBI" id="CHEBI:24646"/>
        <dbReference type="ChEBI" id="CHEBI:57540"/>
        <dbReference type="ChEBI" id="CHEBI:57945"/>
        <dbReference type="ChEBI" id="CHEBI:132124"/>
    </reaction>
</comment>
<comment type="subunit">
    <text evidence="1">NDH-1 is composed of 14 different subunits. Subunits NuoA, H, J, K, L, M, N constitute the membrane sector of the complex.</text>
</comment>
<comment type="subcellular location">
    <subcellularLocation>
        <location evidence="1">Cell inner membrane</location>
        <topology evidence="1">Multi-pass membrane protein</topology>
    </subcellularLocation>
</comment>
<comment type="similarity">
    <text evidence="1">Belongs to the complex I subunit 4L family.</text>
</comment>
<organism>
    <name type="scientific">Coxiella burnetii (strain Dugway 5J108-111)</name>
    <dbReference type="NCBI Taxonomy" id="434922"/>
    <lineage>
        <taxon>Bacteria</taxon>
        <taxon>Pseudomonadati</taxon>
        <taxon>Pseudomonadota</taxon>
        <taxon>Gammaproteobacteria</taxon>
        <taxon>Legionellales</taxon>
        <taxon>Coxiellaceae</taxon>
        <taxon>Coxiella</taxon>
    </lineage>
</organism>
<reference key="1">
    <citation type="journal article" date="2009" name="Infect. Immun.">
        <title>Comparative genomics reveal extensive transposon-mediated genomic plasticity and diversity among potential effector proteins within the genus Coxiella.</title>
        <authorList>
            <person name="Beare P.A."/>
            <person name="Unsworth N."/>
            <person name="Andoh M."/>
            <person name="Voth D.E."/>
            <person name="Omsland A."/>
            <person name="Gilk S.D."/>
            <person name="Williams K.P."/>
            <person name="Sobral B.W."/>
            <person name="Kupko J.J. III"/>
            <person name="Porcella S.F."/>
            <person name="Samuel J.E."/>
            <person name="Heinzen R.A."/>
        </authorList>
    </citation>
    <scope>NUCLEOTIDE SEQUENCE [LARGE SCALE GENOMIC DNA]</scope>
    <source>
        <strain>Dugway 5J108-111</strain>
    </source>
</reference>
<name>NUOK_COXBN</name>
<keyword id="KW-0997">Cell inner membrane</keyword>
<keyword id="KW-1003">Cell membrane</keyword>
<keyword id="KW-0472">Membrane</keyword>
<keyword id="KW-0520">NAD</keyword>
<keyword id="KW-0874">Quinone</keyword>
<keyword id="KW-1278">Translocase</keyword>
<keyword id="KW-0812">Transmembrane</keyword>
<keyword id="KW-1133">Transmembrane helix</keyword>
<keyword id="KW-0813">Transport</keyword>
<keyword id="KW-0830">Ubiquinone</keyword>
<sequence>MIPLGYFLIIGAILFGLGFAGIIINRKNLIVLLMCIELMLLAVNTNFIAFSQYLGARAGEIFVFFILTVAAAESAIGLAILVLFYRRRGSINVDDMNILKG</sequence>
<evidence type="ECO:0000255" key="1">
    <source>
        <dbReference type="HAMAP-Rule" id="MF_01456"/>
    </source>
</evidence>
<proteinExistence type="inferred from homology"/>